<organism>
    <name type="scientific">Bos taurus</name>
    <name type="common">Bovine</name>
    <dbReference type="NCBI Taxonomy" id="9913"/>
    <lineage>
        <taxon>Eukaryota</taxon>
        <taxon>Metazoa</taxon>
        <taxon>Chordata</taxon>
        <taxon>Craniata</taxon>
        <taxon>Vertebrata</taxon>
        <taxon>Euteleostomi</taxon>
        <taxon>Mammalia</taxon>
        <taxon>Eutheria</taxon>
        <taxon>Laurasiatheria</taxon>
        <taxon>Artiodactyla</taxon>
        <taxon>Ruminantia</taxon>
        <taxon>Pecora</taxon>
        <taxon>Bovidae</taxon>
        <taxon>Bovinae</taxon>
        <taxon>Bos</taxon>
    </lineage>
</organism>
<protein>
    <recommendedName>
        <fullName>PCNA-interacting partner</fullName>
        <shortName>PARI</shortName>
    </recommendedName>
    <alternativeName>
        <fullName>PARP-1 binding protein</fullName>
    </alternativeName>
    <alternativeName>
        <fullName>PARP1-binding protein</fullName>
        <shortName>PARPBP</shortName>
    </alternativeName>
</protein>
<proteinExistence type="inferred from homology"/>
<evidence type="ECO:0000250" key="1"/>
<evidence type="ECO:0000250" key="2">
    <source>
        <dbReference type="UniProtKB" id="Q6IRT3"/>
    </source>
</evidence>
<evidence type="ECO:0000250" key="3">
    <source>
        <dbReference type="UniProtKB" id="Q9NWS1"/>
    </source>
</evidence>
<evidence type="ECO:0000256" key="4">
    <source>
        <dbReference type="SAM" id="MobiDB-lite"/>
    </source>
</evidence>
<evidence type="ECO:0000305" key="5"/>
<comment type="function">
    <text evidence="1">Required to suppress inappropriate homologous recombination, thereby playing a central role DNA repair and in the maintenance of genomic stability. Antagonizes homologous recombination by interfering with the formation of the RAD51-DNA homologous recombination structure. Binds single-strand DNA and poly(A) homopolymers. Positively regulate the poly(ADP-ribosyl)ation activity of PARP1; however such function may be indirect (By similarity).</text>
</comment>
<comment type="subunit">
    <text evidence="2 3">Interacts with RAD51 and PCNA. Interacts with PARP1 (By similarity). Interacts with TASOR (By similarity).</text>
</comment>
<comment type="subcellular location">
    <subcellularLocation>
        <location evidence="1">Cytoplasm</location>
    </subcellularLocation>
    <subcellularLocation>
        <location evidence="1">Nucleus</location>
    </subcellularLocation>
    <text evidence="1">Localizes to chromatin in response to S phase arrest but not in mitosis. Targeted to chromatin via its interaction with PCNA (By similarity).</text>
</comment>
<comment type="similarity">
    <text evidence="5">Belongs to the PARI family.</text>
</comment>
<reference key="1">
    <citation type="journal article" date="2009" name="Genome Biol.">
        <title>A whole-genome assembly of the domestic cow, Bos taurus.</title>
        <authorList>
            <person name="Zimin A.V."/>
            <person name="Delcher A.L."/>
            <person name="Florea L."/>
            <person name="Kelley D.R."/>
            <person name="Schatz M.C."/>
            <person name="Puiu D."/>
            <person name="Hanrahan F."/>
            <person name="Pertea G."/>
            <person name="Van Tassell C.P."/>
            <person name="Sonstegard T.S."/>
            <person name="Marcais G."/>
            <person name="Roberts M."/>
            <person name="Subramanian P."/>
            <person name="Yorke J.A."/>
            <person name="Salzberg S.L."/>
        </authorList>
    </citation>
    <scope>NUCLEOTIDE SEQUENCE [LARGE SCALE GENOMIC DNA]</scope>
    <source>
        <strain>Hereford</strain>
    </source>
</reference>
<keyword id="KW-0963">Cytoplasm</keyword>
<keyword id="KW-0227">DNA damage</keyword>
<keyword id="KW-0234">DNA repair</keyword>
<keyword id="KW-0238">DNA-binding</keyword>
<keyword id="KW-0539">Nucleus</keyword>
<keyword id="KW-1185">Reference proteome</keyword>
<name>PARI_BOVIN</name>
<gene>
    <name type="primary">PARPBP</name>
    <name type="synonym">PARI</name>
</gene>
<accession>F1MF21</accession>
<sequence length="582" mass="65429">MAGLNQKSILDMIKEFRRNWHTLCNSERTTVCGADSMLLALQLSMAENNKQHSGEFTVSLSDIILTWKYFLHEKLNLPVENIKVIDHYEDIRKIYDDFLKNSNMLDLIDVYKKCSDLTSNCENYANISPSRLLDFLSGREYAVDDETDFSEPVSPMSKHNQENEKVQLLAKKIIYSYLNLLVNSKNDLALAHILNIPDRGLGREAFTDLKHAAREKQMSIFLVATSFIRTIELGGKGYAPSPSDPLRAHIKGLSNFINFIDKLDEILGEVSNPSIAGGRILSVIKMQLIKGQNSRDPFYKAVEEVAQDLDLRIKNIINSQQGDVALSTTDISPARPKSHTINHGTAYCGRDTVKALLVLLDEEAASAPTKNKAELLYDNENTIHPNGTSVLTLFRCRSPTQVDNSPMKPLRERIYKSMEEKKIKMKQTSIRSQFACTYKDDCMISKDKWNNVNSASEPLCVLHMENDLSEGVNSSVGRPTIGTSSGNVHLGRSEKEKVARKSSSLTGNTSSKRKQVDLDDENILCDNGNEPLQHKIVKIPKTSKDLQNKLDGKLLRVAKSNRCTTKDKLITGQTKLTQFFRL</sequence>
<dbReference type="EMBL" id="DAAA02013696">
    <property type="status" value="NOT_ANNOTATED_CDS"/>
    <property type="molecule type" value="Genomic_DNA"/>
</dbReference>
<dbReference type="SMR" id="F1MF21"/>
<dbReference type="FunCoup" id="F1MF21">
    <property type="interactions" value="558"/>
</dbReference>
<dbReference type="STRING" id="9913.ENSBTAP00000059620"/>
<dbReference type="PaxDb" id="9913-ENSBTAP00000053842"/>
<dbReference type="eggNOG" id="ENOG502QR2U">
    <property type="taxonomic scope" value="Eukaryota"/>
</dbReference>
<dbReference type="HOGENOM" id="CLU_034470_1_0_1"/>
<dbReference type="InParanoid" id="F1MF21"/>
<dbReference type="TreeFam" id="TF332230"/>
<dbReference type="Proteomes" id="UP000009136">
    <property type="component" value="Unplaced"/>
</dbReference>
<dbReference type="GO" id="GO:0000785">
    <property type="term" value="C:chromatin"/>
    <property type="evidence" value="ECO:0000250"/>
    <property type="project" value="UniProtKB"/>
</dbReference>
<dbReference type="GO" id="GO:0005737">
    <property type="term" value="C:cytoplasm"/>
    <property type="evidence" value="ECO:0007669"/>
    <property type="project" value="UniProtKB-SubCell"/>
</dbReference>
<dbReference type="GO" id="GO:0005634">
    <property type="term" value="C:nucleus"/>
    <property type="evidence" value="ECO:0007669"/>
    <property type="project" value="UniProtKB-SubCell"/>
</dbReference>
<dbReference type="GO" id="GO:0003677">
    <property type="term" value="F:DNA binding"/>
    <property type="evidence" value="ECO:0007669"/>
    <property type="project" value="UniProtKB-KW"/>
</dbReference>
<dbReference type="GO" id="GO:0006281">
    <property type="term" value="P:DNA repair"/>
    <property type="evidence" value="ECO:0007669"/>
    <property type="project" value="UniProtKB-KW"/>
</dbReference>
<dbReference type="GO" id="GO:2000042">
    <property type="term" value="P:negative regulation of double-strand break repair via homologous recombination"/>
    <property type="evidence" value="ECO:0000250"/>
    <property type="project" value="UniProtKB"/>
</dbReference>
<dbReference type="FunFam" id="1.10.486.10:FF:000004">
    <property type="entry name" value="PCNA-interacting partner isoform X3"/>
    <property type="match status" value="1"/>
</dbReference>
<dbReference type="Gene3D" id="1.10.486.10">
    <property type="entry name" value="PCRA, domain 4"/>
    <property type="match status" value="1"/>
</dbReference>
<dbReference type="InterPro" id="IPR027417">
    <property type="entry name" value="P-loop_NTPase"/>
</dbReference>
<dbReference type="InterPro" id="IPR038932">
    <property type="entry name" value="PARPBP"/>
</dbReference>
<dbReference type="PANTHER" id="PTHR32121">
    <property type="entry name" value="PCNA-INTERACTING PARTNER"/>
    <property type="match status" value="1"/>
</dbReference>
<dbReference type="PANTHER" id="PTHR32121:SF0">
    <property type="entry name" value="PCNA-INTERACTING PARTNER"/>
    <property type="match status" value="1"/>
</dbReference>
<dbReference type="SUPFAM" id="SSF52540">
    <property type="entry name" value="P-loop containing nucleoside triphosphate hydrolases"/>
    <property type="match status" value="1"/>
</dbReference>
<feature type="chain" id="PRO_0000415568" description="PCNA-interacting partner">
    <location>
        <begin position="1"/>
        <end position="582"/>
    </location>
</feature>
<feature type="region of interest" description="Disordered" evidence="4">
    <location>
        <begin position="471"/>
        <end position="514"/>
    </location>
</feature>
<feature type="compositionally biased region" description="Polar residues" evidence="4">
    <location>
        <begin position="471"/>
        <end position="487"/>
    </location>
</feature>
<feature type="compositionally biased region" description="Polar residues" evidence="4">
    <location>
        <begin position="501"/>
        <end position="510"/>
    </location>
</feature>